<proteinExistence type="inferred from homology"/>
<comment type="function">
    <text evidence="1">Component of the eukaryotic translation initiation factor 3 (eIF-3) complex, which is involved in protein synthesis of a specialized repertoire of mRNAs and, together with other initiation factors, stimulates binding of mRNA and methionyl-tRNAi to the 40S ribosome. The eIF-3 complex specifically targets and initiates translation of a subset of mRNAs involved in cell proliferation.</text>
</comment>
<comment type="subunit">
    <text evidence="1">Component of the eukaryotic translation initiation factor 3 (eIF-3) complex.</text>
</comment>
<comment type="subcellular location">
    <subcellularLocation>
        <location evidence="1">Cytoplasm</location>
    </subcellularLocation>
</comment>
<comment type="similarity">
    <text evidence="1">Belongs to the eIF-3 subunit K family.</text>
</comment>
<evidence type="ECO:0000255" key="1">
    <source>
        <dbReference type="HAMAP-Rule" id="MF_03010"/>
    </source>
</evidence>
<evidence type="ECO:0000255" key="2">
    <source>
        <dbReference type="PROSITE-ProRule" id="PRU01185"/>
    </source>
</evidence>
<accession>Q177J8</accession>
<feature type="chain" id="PRO_0000365036" description="Eukaryotic translation initiation factor 3 subunit K">
    <location>
        <begin position="1"/>
        <end position="221"/>
    </location>
</feature>
<feature type="domain" description="PCI" evidence="2">
    <location>
        <begin position="46"/>
        <end position="207"/>
    </location>
</feature>
<protein>
    <recommendedName>
        <fullName evidence="1">Eukaryotic translation initiation factor 3 subunit K</fullName>
        <shortName evidence="1">eIF3k</shortName>
    </recommendedName>
    <alternativeName>
        <fullName evidence="1">eIF-3 p25</fullName>
    </alternativeName>
</protein>
<gene>
    <name type="ORF">AAEL006115</name>
</gene>
<keyword id="KW-0963">Cytoplasm</keyword>
<keyword id="KW-0396">Initiation factor</keyword>
<keyword id="KW-0648">Protein biosynthesis</keyword>
<keyword id="KW-1185">Reference proteome</keyword>
<sequence>MVHYVKMEDGKVMPIQDMLKSIERYNPEHLKVIEAYVEEQARDNQYDLEANLACLKLYQFNPQLMNLDVTYVILLKALTNFPHTDFVLCKCLLLPAQMNDDTVKEIIYLADILEKCDFTLFWSRVAKNPPFFKKISGFFDSIRKFVCHVVGITFQSIEKQYLVRLLGDVDDNVLRAWVKKNNWKEDGQYITVAVQEGNIKTKHITEKIDFENLAPLMANCL</sequence>
<reference key="1">
    <citation type="journal article" date="2007" name="Science">
        <title>Genome sequence of Aedes aegypti, a major arbovirus vector.</title>
        <authorList>
            <person name="Nene V."/>
            <person name="Wortman J.R."/>
            <person name="Lawson D."/>
            <person name="Haas B.J."/>
            <person name="Kodira C.D."/>
            <person name="Tu Z.J."/>
            <person name="Loftus B.J."/>
            <person name="Xi Z."/>
            <person name="Megy K."/>
            <person name="Grabherr M."/>
            <person name="Ren Q."/>
            <person name="Zdobnov E.M."/>
            <person name="Lobo N.F."/>
            <person name="Campbell K.S."/>
            <person name="Brown S.E."/>
            <person name="Bonaldo M.F."/>
            <person name="Zhu J."/>
            <person name="Sinkins S.P."/>
            <person name="Hogenkamp D.G."/>
            <person name="Amedeo P."/>
            <person name="Arensburger P."/>
            <person name="Atkinson P.W."/>
            <person name="Bidwell S.L."/>
            <person name="Biedler J."/>
            <person name="Birney E."/>
            <person name="Bruggner R.V."/>
            <person name="Costas J."/>
            <person name="Coy M.R."/>
            <person name="Crabtree J."/>
            <person name="Crawford M."/>
            <person name="DeBruyn B."/>
            <person name="DeCaprio D."/>
            <person name="Eiglmeier K."/>
            <person name="Eisenstadt E."/>
            <person name="El-Dorry H."/>
            <person name="Gelbart W.M."/>
            <person name="Gomes S.L."/>
            <person name="Hammond M."/>
            <person name="Hannick L.I."/>
            <person name="Hogan J.R."/>
            <person name="Holmes M.H."/>
            <person name="Jaffe D."/>
            <person name="Johnston S.J."/>
            <person name="Kennedy R.C."/>
            <person name="Koo H."/>
            <person name="Kravitz S."/>
            <person name="Kriventseva E.V."/>
            <person name="Kulp D."/>
            <person name="Labutti K."/>
            <person name="Lee E."/>
            <person name="Li S."/>
            <person name="Lovin D.D."/>
            <person name="Mao C."/>
            <person name="Mauceli E."/>
            <person name="Menck C.F."/>
            <person name="Miller J.R."/>
            <person name="Montgomery P."/>
            <person name="Mori A."/>
            <person name="Nascimento A.L."/>
            <person name="Naveira H.F."/>
            <person name="Nusbaum C."/>
            <person name="O'Leary S.B."/>
            <person name="Orvis J."/>
            <person name="Pertea M."/>
            <person name="Quesneville H."/>
            <person name="Reidenbach K.R."/>
            <person name="Rogers Y.-H.C."/>
            <person name="Roth C.W."/>
            <person name="Schneider J.R."/>
            <person name="Schatz M."/>
            <person name="Shumway M."/>
            <person name="Stanke M."/>
            <person name="Stinson E.O."/>
            <person name="Tubio J.M.C."/>
            <person name="Vanzee J.P."/>
            <person name="Verjovski-Almeida S."/>
            <person name="Werner D."/>
            <person name="White O.R."/>
            <person name="Wyder S."/>
            <person name="Zeng Q."/>
            <person name="Zhao Q."/>
            <person name="Zhao Y."/>
            <person name="Hill C.A."/>
            <person name="Raikhel A.S."/>
            <person name="Soares M.B."/>
            <person name="Knudson D.L."/>
            <person name="Lee N.H."/>
            <person name="Galagan J."/>
            <person name="Salzberg S.L."/>
            <person name="Paulsen I.T."/>
            <person name="Dimopoulos G."/>
            <person name="Collins F.H."/>
            <person name="Bruce B."/>
            <person name="Fraser-Liggett C.M."/>
            <person name="Severson D.W."/>
        </authorList>
    </citation>
    <scope>NUCLEOTIDE SEQUENCE [LARGE SCALE GENOMIC DNA]</scope>
    <source>
        <strain>LVPib12</strain>
    </source>
</reference>
<dbReference type="EMBL" id="CH477375">
    <property type="protein sequence ID" value="EAT42328.1"/>
    <property type="molecule type" value="Genomic_DNA"/>
</dbReference>
<dbReference type="EMBL" id="CH477375">
    <property type="protein sequence ID" value="EAT42329.1"/>
    <property type="molecule type" value="Genomic_DNA"/>
</dbReference>
<dbReference type="RefSeq" id="XP_001651797.1">
    <property type="nucleotide sequence ID" value="XM_001651747.1"/>
</dbReference>
<dbReference type="SMR" id="Q177J8"/>
<dbReference type="FunCoup" id="Q177J8">
    <property type="interactions" value="1846"/>
</dbReference>
<dbReference type="STRING" id="7159.Q177J8"/>
<dbReference type="PaxDb" id="7159-AAEL006115-PA"/>
<dbReference type="EnsemblMetazoa" id="AAEL006115-RA">
    <property type="protein sequence ID" value="AAEL006115-PA"/>
    <property type="gene ID" value="AAEL006115"/>
</dbReference>
<dbReference type="GeneID" id="5567501"/>
<dbReference type="KEGG" id="aag:5567501"/>
<dbReference type="CTD" id="27335"/>
<dbReference type="VEuPathDB" id="VectorBase:AAEL006115"/>
<dbReference type="eggNOG" id="KOG3252">
    <property type="taxonomic scope" value="Eukaryota"/>
</dbReference>
<dbReference type="HOGENOM" id="CLU_076723_1_0_1"/>
<dbReference type="InParanoid" id="Q177J8"/>
<dbReference type="OMA" id="WKHQGQG"/>
<dbReference type="OrthoDB" id="337745at2759"/>
<dbReference type="PhylomeDB" id="Q177J8"/>
<dbReference type="Proteomes" id="UP000008820">
    <property type="component" value="Chromosome 3"/>
</dbReference>
<dbReference type="Proteomes" id="UP000682892">
    <property type="component" value="Unassembled WGS sequence"/>
</dbReference>
<dbReference type="GO" id="GO:0016282">
    <property type="term" value="C:eukaryotic 43S preinitiation complex"/>
    <property type="evidence" value="ECO:0007669"/>
    <property type="project" value="UniProtKB-UniRule"/>
</dbReference>
<dbReference type="GO" id="GO:0033290">
    <property type="term" value="C:eukaryotic 48S preinitiation complex"/>
    <property type="evidence" value="ECO:0007669"/>
    <property type="project" value="UniProtKB-UniRule"/>
</dbReference>
<dbReference type="GO" id="GO:0005852">
    <property type="term" value="C:eukaryotic translation initiation factor 3 complex"/>
    <property type="evidence" value="ECO:0007669"/>
    <property type="project" value="UniProtKB-UniRule"/>
</dbReference>
<dbReference type="GO" id="GO:0043022">
    <property type="term" value="F:ribosome binding"/>
    <property type="evidence" value="ECO:0007669"/>
    <property type="project" value="InterPro"/>
</dbReference>
<dbReference type="GO" id="GO:0003723">
    <property type="term" value="F:RNA binding"/>
    <property type="evidence" value="ECO:0007669"/>
    <property type="project" value="UniProtKB-UniRule"/>
</dbReference>
<dbReference type="GO" id="GO:0003743">
    <property type="term" value="F:translation initiation factor activity"/>
    <property type="evidence" value="ECO:0007669"/>
    <property type="project" value="UniProtKB-UniRule"/>
</dbReference>
<dbReference type="GO" id="GO:0001732">
    <property type="term" value="P:formation of cytoplasmic translation initiation complex"/>
    <property type="evidence" value="ECO:0007669"/>
    <property type="project" value="UniProtKB-UniRule"/>
</dbReference>
<dbReference type="GO" id="GO:0006446">
    <property type="term" value="P:regulation of translational initiation"/>
    <property type="evidence" value="ECO:0007669"/>
    <property type="project" value="InterPro"/>
</dbReference>
<dbReference type="FunFam" id="1.10.10.10:FF:000212">
    <property type="entry name" value="Eukaryotic translation initiation factor 3 subunit K"/>
    <property type="match status" value="1"/>
</dbReference>
<dbReference type="FunFam" id="1.25.40.250:FF:000001">
    <property type="entry name" value="Eukaryotic translation initiation factor 3 subunit K"/>
    <property type="match status" value="1"/>
</dbReference>
<dbReference type="Gene3D" id="1.25.40.250">
    <property type="entry name" value="ARM repeat, domain 1"/>
    <property type="match status" value="1"/>
</dbReference>
<dbReference type="Gene3D" id="1.10.10.10">
    <property type="entry name" value="Winged helix-like DNA-binding domain superfamily/Winged helix DNA-binding domain"/>
    <property type="match status" value="1"/>
</dbReference>
<dbReference type="HAMAP" id="MF_03010">
    <property type="entry name" value="eIF3k"/>
    <property type="match status" value="1"/>
</dbReference>
<dbReference type="InterPro" id="IPR016024">
    <property type="entry name" value="ARM-type_fold"/>
</dbReference>
<dbReference type="InterPro" id="IPR033464">
    <property type="entry name" value="CSN8_PSD8_EIF3K"/>
</dbReference>
<dbReference type="InterPro" id="IPR009374">
    <property type="entry name" value="eIF3k"/>
</dbReference>
<dbReference type="InterPro" id="IPR000717">
    <property type="entry name" value="PCI_dom"/>
</dbReference>
<dbReference type="InterPro" id="IPR016020">
    <property type="entry name" value="Transl_init_fac_sub12_N_euk"/>
</dbReference>
<dbReference type="InterPro" id="IPR036388">
    <property type="entry name" value="WH-like_DNA-bd_sf"/>
</dbReference>
<dbReference type="InterPro" id="IPR036390">
    <property type="entry name" value="WH_DNA-bd_sf"/>
</dbReference>
<dbReference type="PANTHER" id="PTHR13022">
    <property type="entry name" value="EUKARYOTIC TRANSLATION INITIATION FACTOR 3 SUBUNIT 11"/>
    <property type="match status" value="1"/>
</dbReference>
<dbReference type="PANTHER" id="PTHR13022:SF0">
    <property type="entry name" value="EUKARYOTIC TRANSLATION INITIATION FACTOR 3 SUBUNIT K"/>
    <property type="match status" value="1"/>
</dbReference>
<dbReference type="Pfam" id="PF10075">
    <property type="entry name" value="CSN8_PSD8_EIF3K"/>
    <property type="match status" value="1"/>
</dbReference>
<dbReference type="SUPFAM" id="SSF48371">
    <property type="entry name" value="ARM repeat"/>
    <property type="match status" value="1"/>
</dbReference>
<dbReference type="SUPFAM" id="SSF46785">
    <property type="entry name" value="Winged helix' DNA-binding domain"/>
    <property type="match status" value="1"/>
</dbReference>
<dbReference type="PROSITE" id="PS50250">
    <property type="entry name" value="PCI"/>
    <property type="match status" value="1"/>
</dbReference>
<organism>
    <name type="scientific">Aedes aegypti</name>
    <name type="common">Yellowfever mosquito</name>
    <name type="synonym">Culex aegypti</name>
    <dbReference type="NCBI Taxonomy" id="7159"/>
    <lineage>
        <taxon>Eukaryota</taxon>
        <taxon>Metazoa</taxon>
        <taxon>Ecdysozoa</taxon>
        <taxon>Arthropoda</taxon>
        <taxon>Hexapoda</taxon>
        <taxon>Insecta</taxon>
        <taxon>Pterygota</taxon>
        <taxon>Neoptera</taxon>
        <taxon>Endopterygota</taxon>
        <taxon>Diptera</taxon>
        <taxon>Nematocera</taxon>
        <taxon>Culicoidea</taxon>
        <taxon>Culicidae</taxon>
        <taxon>Culicinae</taxon>
        <taxon>Aedini</taxon>
        <taxon>Aedes</taxon>
        <taxon>Stegomyia</taxon>
    </lineage>
</organism>
<name>EIF3K_AEDAE</name>